<dbReference type="EC" id="2.7.8.7" evidence="1"/>
<dbReference type="EMBL" id="CP000560">
    <property type="protein sequence ID" value="ABS72895.1"/>
    <property type="molecule type" value="Genomic_DNA"/>
</dbReference>
<dbReference type="RefSeq" id="WP_012116869.1">
    <property type="nucleotide sequence ID" value="NC_009725.2"/>
</dbReference>
<dbReference type="SMR" id="A7Z1L9"/>
<dbReference type="GeneID" id="93079629"/>
<dbReference type="KEGG" id="bay:RBAM_004960"/>
<dbReference type="HOGENOM" id="CLU_089696_1_2_9"/>
<dbReference type="Proteomes" id="UP000001120">
    <property type="component" value="Chromosome"/>
</dbReference>
<dbReference type="GO" id="GO:0005829">
    <property type="term" value="C:cytosol"/>
    <property type="evidence" value="ECO:0007669"/>
    <property type="project" value="TreeGrafter"/>
</dbReference>
<dbReference type="GO" id="GO:0008897">
    <property type="term" value="F:holo-[acyl-carrier-protein] synthase activity"/>
    <property type="evidence" value="ECO:0007669"/>
    <property type="project" value="UniProtKB-UniRule"/>
</dbReference>
<dbReference type="GO" id="GO:0000287">
    <property type="term" value="F:magnesium ion binding"/>
    <property type="evidence" value="ECO:0007669"/>
    <property type="project" value="UniProtKB-UniRule"/>
</dbReference>
<dbReference type="GO" id="GO:0006633">
    <property type="term" value="P:fatty acid biosynthetic process"/>
    <property type="evidence" value="ECO:0007669"/>
    <property type="project" value="UniProtKB-UniRule"/>
</dbReference>
<dbReference type="GO" id="GO:0019878">
    <property type="term" value="P:lysine biosynthetic process via aminoadipic acid"/>
    <property type="evidence" value="ECO:0007669"/>
    <property type="project" value="TreeGrafter"/>
</dbReference>
<dbReference type="Gene3D" id="3.90.470.20">
    <property type="entry name" value="4'-phosphopantetheinyl transferase domain"/>
    <property type="match status" value="1"/>
</dbReference>
<dbReference type="HAMAP" id="MF_00101">
    <property type="entry name" value="AcpS"/>
    <property type="match status" value="1"/>
</dbReference>
<dbReference type="InterPro" id="IPR008278">
    <property type="entry name" value="4-PPantetheinyl_Trfase_dom"/>
</dbReference>
<dbReference type="InterPro" id="IPR037143">
    <property type="entry name" value="4-PPantetheinyl_Trfase_dom_sf"/>
</dbReference>
<dbReference type="InterPro" id="IPR002582">
    <property type="entry name" value="ACPS"/>
</dbReference>
<dbReference type="InterPro" id="IPR050559">
    <property type="entry name" value="P-Pant_transferase_sf"/>
</dbReference>
<dbReference type="InterPro" id="IPR004568">
    <property type="entry name" value="Ppantetheine-prot_Trfase_dom"/>
</dbReference>
<dbReference type="NCBIfam" id="TIGR00516">
    <property type="entry name" value="acpS"/>
    <property type="match status" value="1"/>
</dbReference>
<dbReference type="NCBIfam" id="TIGR00556">
    <property type="entry name" value="pantethn_trn"/>
    <property type="match status" value="1"/>
</dbReference>
<dbReference type="PANTHER" id="PTHR12215:SF10">
    <property type="entry name" value="L-AMINOADIPATE-SEMIALDEHYDE DEHYDROGENASE-PHOSPHOPANTETHEINYL TRANSFERASE"/>
    <property type="match status" value="1"/>
</dbReference>
<dbReference type="PANTHER" id="PTHR12215">
    <property type="entry name" value="PHOSPHOPANTETHEINE TRANSFERASE"/>
    <property type="match status" value="1"/>
</dbReference>
<dbReference type="Pfam" id="PF01648">
    <property type="entry name" value="ACPS"/>
    <property type="match status" value="1"/>
</dbReference>
<dbReference type="SUPFAM" id="SSF56214">
    <property type="entry name" value="4'-phosphopantetheinyl transferase"/>
    <property type="match status" value="1"/>
</dbReference>
<reference key="1">
    <citation type="journal article" date="2007" name="Nat. Biotechnol.">
        <title>Comparative analysis of the complete genome sequence of the plant growth-promoting bacterium Bacillus amyloliquefaciens FZB42.</title>
        <authorList>
            <person name="Chen X.H."/>
            <person name="Koumoutsi A."/>
            <person name="Scholz R."/>
            <person name="Eisenreich A."/>
            <person name="Schneider K."/>
            <person name="Heinemeyer I."/>
            <person name="Morgenstern B."/>
            <person name="Voss B."/>
            <person name="Hess W.R."/>
            <person name="Reva O."/>
            <person name="Junge H."/>
            <person name="Voigt B."/>
            <person name="Jungblut P.R."/>
            <person name="Vater J."/>
            <person name="Suessmuth R."/>
            <person name="Liesegang H."/>
            <person name="Strittmatter A."/>
            <person name="Gottschalk G."/>
            <person name="Borriss R."/>
        </authorList>
    </citation>
    <scope>NUCLEOTIDE SEQUENCE [LARGE SCALE GENOMIC DNA]</scope>
    <source>
        <strain>DSM 23117 / BGSC 10A6 / LMG 26770 / FZB42</strain>
    </source>
</reference>
<evidence type="ECO:0000255" key="1">
    <source>
        <dbReference type="HAMAP-Rule" id="MF_00101"/>
    </source>
</evidence>
<gene>
    <name evidence="1" type="primary">acpS</name>
    <name type="ordered locus">RBAM_004960</name>
</gene>
<name>ACPS_BACVZ</name>
<protein>
    <recommendedName>
        <fullName evidence="1">Holo-[acyl-carrier-protein] synthase</fullName>
        <shortName evidence="1">Holo-ACP synthase</shortName>
        <ecNumber evidence="1">2.7.8.7</ecNumber>
    </recommendedName>
    <alternativeName>
        <fullName evidence="1">4'-phosphopantetheinyl transferase AcpS</fullName>
    </alternativeName>
</protein>
<sequence length="121" mass="13503">MIFGIGIDIVELHRIENMLSRQARFPQRILTEAEYARFTLLSDKRKIEFLAGRFAAKEAFSKAYGTGIGKELSFQDIETGNDKAGKPVLACAKLDCATVHVSITHTKEYAAAQVVIERLSR</sequence>
<feature type="chain" id="PRO_1000008385" description="Holo-[acyl-carrier-protein] synthase">
    <location>
        <begin position="1"/>
        <end position="121"/>
    </location>
</feature>
<feature type="binding site" evidence="1">
    <location>
        <position position="8"/>
    </location>
    <ligand>
        <name>Mg(2+)</name>
        <dbReference type="ChEBI" id="CHEBI:18420"/>
    </ligand>
</feature>
<feature type="binding site" evidence="1">
    <location>
        <position position="58"/>
    </location>
    <ligand>
        <name>Mg(2+)</name>
        <dbReference type="ChEBI" id="CHEBI:18420"/>
    </ligand>
</feature>
<comment type="function">
    <text evidence="1">Transfers the 4'-phosphopantetheine moiety from coenzyme A to a Ser of acyl-carrier-protein.</text>
</comment>
<comment type="catalytic activity">
    <reaction evidence="1">
        <text>apo-[ACP] + CoA = holo-[ACP] + adenosine 3',5'-bisphosphate + H(+)</text>
        <dbReference type="Rhea" id="RHEA:12068"/>
        <dbReference type="Rhea" id="RHEA-COMP:9685"/>
        <dbReference type="Rhea" id="RHEA-COMP:9690"/>
        <dbReference type="ChEBI" id="CHEBI:15378"/>
        <dbReference type="ChEBI" id="CHEBI:29999"/>
        <dbReference type="ChEBI" id="CHEBI:57287"/>
        <dbReference type="ChEBI" id="CHEBI:58343"/>
        <dbReference type="ChEBI" id="CHEBI:64479"/>
        <dbReference type="EC" id="2.7.8.7"/>
    </reaction>
</comment>
<comment type="cofactor">
    <cofactor evidence="1">
        <name>Mg(2+)</name>
        <dbReference type="ChEBI" id="CHEBI:18420"/>
    </cofactor>
</comment>
<comment type="subcellular location">
    <subcellularLocation>
        <location evidence="1">Cytoplasm</location>
    </subcellularLocation>
</comment>
<comment type="similarity">
    <text evidence="1">Belongs to the P-Pant transferase superfamily. AcpS family.</text>
</comment>
<keyword id="KW-0963">Cytoplasm</keyword>
<keyword id="KW-0275">Fatty acid biosynthesis</keyword>
<keyword id="KW-0276">Fatty acid metabolism</keyword>
<keyword id="KW-0444">Lipid biosynthesis</keyword>
<keyword id="KW-0443">Lipid metabolism</keyword>
<keyword id="KW-0460">Magnesium</keyword>
<keyword id="KW-0479">Metal-binding</keyword>
<keyword id="KW-0808">Transferase</keyword>
<accession>A7Z1L9</accession>
<proteinExistence type="inferred from homology"/>
<organism>
    <name type="scientific">Bacillus velezensis (strain DSM 23117 / BGSC 10A6 / LMG 26770 / FZB42)</name>
    <name type="common">Bacillus amyloliquefaciens subsp. plantarum</name>
    <dbReference type="NCBI Taxonomy" id="326423"/>
    <lineage>
        <taxon>Bacteria</taxon>
        <taxon>Bacillati</taxon>
        <taxon>Bacillota</taxon>
        <taxon>Bacilli</taxon>
        <taxon>Bacillales</taxon>
        <taxon>Bacillaceae</taxon>
        <taxon>Bacillus</taxon>
        <taxon>Bacillus amyloliquefaciens group</taxon>
    </lineage>
</organism>